<gene>
    <name type="primary">Nhsl1</name>
    <name type="synonym">Kiaa1357</name>
</gene>
<accession>Q8CAF4</accession>
<accession>Q5DTY4</accession>
<accession>Q6P6Y7</accession>
<accession>Q8C8Z7</accession>
<accession>Q8K0R2</accession>
<accession>Q91YY6</accession>
<accession>Q9CYM2</accession>
<name>NHSL1_MOUSE</name>
<protein>
    <recommendedName>
        <fullName>NHS-like protein 1</fullName>
    </recommendedName>
</protein>
<keyword id="KW-0025">Alternative splicing</keyword>
<keyword id="KW-0597">Phosphoprotein</keyword>
<keyword id="KW-1185">Reference proteome</keyword>
<sequence length="1587" mass="169419">MKKDGSSGSFGIKASPGSLSRAVSWINFSSLSRQTKRLFRSDGELSVCGHQVEADDENWIYRTQPRKAVSNLDEESRWTVHYTAPWHQQENVFLPATRPPCVEDLHRQAKLNLKSVLRECDKLRQDGCRSSQYYSQGPTFAAGSSPCDDYQDEDTEADRKCSLSSSEEERFIGIRRPKTPTSGDFSDLHTQTNWTKSLPLPTPEEKTRQQAQTVQADVVPINITASATGQDDDGSAHSLYVPDHYSTLGRLDSYRSTGQCLETRDTSCQTEDVKVIPPSMRRIRAHKGVGVAAQMSHLSGSSGNMSVLSDSAGVVFPSRLSNDTGFHSLPRTGPRASTYSLEGRMGALGSTEDTDDTSPYQGGSLQGHENFAHLGGASSTGMLSRPKSQQLRFLESPACVVSPHAAYSTSVIPNATLLSSSEVIVIHTAQSAGQLDSRTPGSSSYSKIKPRDRPTPRCSVKDDHQSPRHHWNEGHLIHSRALASSVPGATTLLSLHDSEVSLNAPANRENGSQAILYHCRNNPSFPDHPSDVDGKSECSYSGDRGCGSSEPWEYKTSSNGRASPLKPHLATPGCSTPTSNVSSCSLDQTSLKGDTRSLCSEDHDGYYTTTHEAGNLYTLSDGLGNPRHSMVNVFDGRAQRSQGDQAAHQDKILSRNISLKKAKKPPLPPSRTDSLRRIPKKNNQTNGQVLNESLIASLQHSLQLSLPGKGGSSPSQSPCSDFEEPWLPRSRSQSIVSEGSSLTSTTTPNVYSLCGVTPSQSDTSSVKSEYTDPWGYYIDYTSLQEDPGNPTGGCSANTEAATGNGPVRHIQEGSRVPVPQVPGCSVRPKIASPEKSQRVTSPSSGYSSQSNTPTALTPVPVFLKSMSPANGKGKAKPKVPERKSSLISSMSISSSSTSLSSNTSTEGSGTMKKLDTTLASALAPPPPPLPPLPSPCLADKSPFLPPPPPLADCSEGSPLPPSPMFPPPPPEALVPFCSPTDGCLSPSPTAVSPSLPRSLPPVPAPPPFLPSSEPPPAPPLDPKLMKENRPFFKNSSQSESSREALRRPANKEEGCRPPMPLITTEALQMVQLRPVRKNSGAGAVLFSEPSAQEQRTPTAPQYHLKPSAFLKSRNSINEMESESQAASVTSSLPMPAKSQSQGDHDSAVERGGLPSCSDGAPGPGPSLRTTLLPDSSPSRKPPPISKKPKLFLVVPPPQRDFTAEPTENGSEAFPGVPSPTRAEGEAVRSQEEKSSPASRAGSHATAPTPGSPALEPGTAGSLSSSIVEANVPMVQPNTSPGPTQEESGENSVDGERNAKSCLSQQGREAGLLEPNTAASSSDPVDVSKEEGSDEVLTPTKPRTTEDLFAAIHRSKRKVLGRKDSEDDHTRNHSPSPPVTPTSAAPNLASPKQVGSIQRSIKKSTTSSDNFKALLLKKGSRSDTSARMSAAEMLKSTDPRFQRSRSEPSADSPDSPSSCSPNKNRRAQEEWAKNEGLMPRSLSFSGPRYSRSRTPPSAASSRYSMRNRIQSSPMTVISEGEGEPAEPADNKARRALDATRVCSLDRLTGQEMDQASLLCSEEPASVDGIGRAEGNGPSEQCGGTEQKS</sequence>
<organism>
    <name type="scientific">Mus musculus</name>
    <name type="common">Mouse</name>
    <dbReference type="NCBI Taxonomy" id="10090"/>
    <lineage>
        <taxon>Eukaryota</taxon>
        <taxon>Metazoa</taxon>
        <taxon>Chordata</taxon>
        <taxon>Craniata</taxon>
        <taxon>Vertebrata</taxon>
        <taxon>Euteleostomi</taxon>
        <taxon>Mammalia</taxon>
        <taxon>Eutheria</taxon>
        <taxon>Euarchontoglires</taxon>
        <taxon>Glires</taxon>
        <taxon>Rodentia</taxon>
        <taxon>Myomorpha</taxon>
        <taxon>Muroidea</taxon>
        <taxon>Muridae</taxon>
        <taxon>Murinae</taxon>
        <taxon>Mus</taxon>
        <taxon>Mus</taxon>
    </lineage>
</organism>
<dbReference type="EMBL" id="AC153560">
    <property type="status" value="NOT_ANNOTATED_CDS"/>
    <property type="molecule type" value="Genomic_DNA"/>
</dbReference>
<dbReference type="EMBL" id="AC153561">
    <property type="status" value="NOT_ANNOTATED_CDS"/>
    <property type="molecule type" value="Genomic_DNA"/>
</dbReference>
<dbReference type="EMBL" id="BC013565">
    <property type="protein sequence ID" value="AAH13565.2"/>
    <property type="status" value="ALT_INIT"/>
    <property type="molecule type" value="mRNA"/>
</dbReference>
<dbReference type="EMBL" id="BC030842">
    <property type="protein sequence ID" value="AAH30842.1"/>
    <property type="status" value="ALT_SEQ"/>
    <property type="molecule type" value="mRNA"/>
</dbReference>
<dbReference type="EMBL" id="BC061949">
    <property type="protein sequence ID" value="AAH61949.1"/>
    <property type="status" value="ALT_INIT"/>
    <property type="molecule type" value="mRNA"/>
</dbReference>
<dbReference type="EMBL" id="AK038892">
    <property type="protein sequence ID" value="BAC30160.2"/>
    <property type="molecule type" value="mRNA"/>
</dbReference>
<dbReference type="EMBL" id="AK017530">
    <property type="protein sequence ID" value="BAB30793.1"/>
    <property type="status" value="ALT_SEQ"/>
    <property type="molecule type" value="mRNA"/>
</dbReference>
<dbReference type="EMBL" id="AK043447">
    <property type="protein sequence ID" value="BAC31551.1"/>
    <property type="status" value="ALT_INIT"/>
    <property type="molecule type" value="mRNA"/>
</dbReference>
<dbReference type="EMBL" id="AK134837">
    <property type="protein sequence ID" value="BAE22306.1"/>
    <property type="status" value="ALT_INIT"/>
    <property type="molecule type" value="mRNA"/>
</dbReference>
<dbReference type="EMBL" id="AK220386">
    <property type="protein sequence ID" value="BAD90251.1"/>
    <property type="molecule type" value="mRNA"/>
</dbReference>
<dbReference type="CCDS" id="CCDS35853.1">
    <molecule id="Q8CAF4-1"/>
</dbReference>
<dbReference type="CCDS" id="CCDS48508.1">
    <molecule id="Q8CAF4-3"/>
</dbReference>
<dbReference type="RefSeq" id="NP_001157064.1">
    <molecule id="Q8CAF4-3"/>
    <property type="nucleotide sequence ID" value="NM_001163592.2"/>
</dbReference>
<dbReference type="RefSeq" id="NP_775566.3">
    <molecule id="Q8CAF4-1"/>
    <property type="nucleotide sequence ID" value="NM_173390.3"/>
</dbReference>
<dbReference type="BioGRID" id="229663">
    <property type="interactions" value="28"/>
</dbReference>
<dbReference type="FunCoup" id="Q8CAF4">
    <property type="interactions" value="420"/>
</dbReference>
<dbReference type="IntAct" id="Q8CAF4">
    <property type="interactions" value="24"/>
</dbReference>
<dbReference type="STRING" id="10090.ENSMUSP00000040799"/>
<dbReference type="GlyGen" id="Q8CAF4">
    <property type="glycosylation" value="7 sites, 1 N-linked glycan (1 site), 1 O-linked glycan (1 site)"/>
</dbReference>
<dbReference type="iPTMnet" id="Q8CAF4"/>
<dbReference type="PhosphoSitePlus" id="Q8CAF4"/>
<dbReference type="PaxDb" id="10090-ENSMUSP00000040799"/>
<dbReference type="PeptideAtlas" id="Q8CAF4"/>
<dbReference type="ProteomicsDB" id="252893">
    <molecule id="Q8CAF4-1"/>
</dbReference>
<dbReference type="ProteomicsDB" id="252894">
    <molecule id="Q8CAF4-3"/>
</dbReference>
<dbReference type="Antibodypedia" id="33056">
    <property type="antibodies" value="66 antibodies from 12 providers"/>
</dbReference>
<dbReference type="Ensembl" id="ENSMUST00000037341.14">
    <molecule id="Q8CAF4-1"/>
    <property type="protein sequence ID" value="ENSMUSP00000040799.8"/>
    <property type="gene ID" value="ENSMUSG00000039835.17"/>
</dbReference>
<dbReference type="Ensembl" id="ENSMUST00000100054.4">
    <molecule id="Q8CAF4-3"/>
    <property type="protein sequence ID" value="ENSMUSP00000097631.4"/>
    <property type="gene ID" value="ENSMUSG00000039835.17"/>
</dbReference>
<dbReference type="GeneID" id="215819"/>
<dbReference type="KEGG" id="mmu:215819"/>
<dbReference type="UCSC" id="uc007emi.1">
    <molecule id="Q8CAF4-1"/>
    <property type="organism name" value="mouse"/>
</dbReference>
<dbReference type="UCSC" id="uc007emj.2">
    <molecule id="Q8CAF4-3"/>
    <property type="organism name" value="mouse"/>
</dbReference>
<dbReference type="AGR" id="MGI:106390"/>
<dbReference type="CTD" id="57224"/>
<dbReference type="MGI" id="MGI:106390">
    <property type="gene designation" value="Nhsl1"/>
</dbReference>
<dbReference type="VEuPathDB" id="HostDB:ENSMUSG00000039835"/>
<dbReference type="eggNOG" id="ENOG502QTFI">
    <property type="taxonomic scope" value="Eukaryota"/>
</dbReference>
<dbReference type="GeneTree" id="ENSGT00950000182963"/>
<dbReference type="InParanoid" id="Q8CAF4"/>
<dbReference type="PhylomeDB" id="Q8CAF4"/>
<dbReference type="TreeFam" id="TF333323"/>
<dbReference type="BioGRID-ORCS" id="215819">
    <property type="hits" value="3 hits in 77 CRISPR screens"/>
</dbReference>
<dbReference type="ChiTaRS" id="Nhsl1">
    <property type="organism name" value="mouse"/>
</dbReference>
<dbReference type="PRO" id="PR:Q8CAF4"/>
<dbReference type="Proteomes" id="UP000000589">
    <property type="component" value="Chromosome 10"/>
</dbReference>
<dbReference type="RNAct" id="Q8CAF4">
    <property type="molecule type" value="protein"/>
</dbReference>
<dbReference type="Bgee" id="ENSMUSG00000039835">
    <property type="expression patterns" value="Expressed in epithelium of lens and 238 other cell types or tissues"/>
</dbReference>
<dbReference type="ExpressionAtlas" id="Q8CAF4">
    <property type="expression patterns" value="baseline and differential"/>
</dbReference>
<dbReference type="InterPro" id="IPR024845">
    <property type="entry name" value="NHS-like"/>
</dbReference>
<dbReference type="PANTHER" id="PTHR23039">
    <property type="entry name" value="NANCE-HORAN SYNDROME PROTEIN"/>
    <property type="match status" value="1"/>
</dbReference>
<dbReference type="PANTHER" id="PTHR23039:SF3">
    <property type="entry name" value="NHS-LIKE PROTEIN 1"/>
    <property type="match status" value="1"/>
</dbReference>
<dbReference type="Pfam" id="PF15273">
    <property type="entry name" value="NHS"/>
    <property type="match status" value="3"/>
</dbReference>
<feature type="chain" id="PRO_0000341354" description="NHS-like protein 1">
    <location>
        <begin position="1"/>
        <end position="1587"/>
    </location>
</feature>
<feature type="region of interest" description="Disordered" evidence="2">
    <location>
        <begin position="140"/>
        <end position="163"/>
    </location>
</feature>
<feature type="region of interest" description="Disordered" evidence="2">
    <location>
        <begin position="176"/>
        <end position="202"/>
    </location>
</feature>
<feature type="region of interest" description="Disordered" evidence="2">
    <location>
        <begin position="431"/>
        <end position="470"/>
    </location>
</feature>
<feature type="region of interest" description="Disordered" evidence="2">
    <location>
        <begin position="549"/>
        <end position="584"/>
    </location>
</feature>
<feature type="region of interest" description="Disordered" evidence="2">
    <location>
        <begin position="661"/>
        <end position="687"/>
    </location>
</feature>
<feature type="region of interest" description="Disordered" evidence="2">
    <location>
        <begin position="705"/>
        <end position="767"/>
    </location>
</feature>
<feature type="region of interest" description="Disordered" evidence="2">
    <location>
        <begin position="789"/>
        <end position="1059"/>
    </location>
</feature>
<feature type="region of interest" description="Disordered" evidence="2">
    <location>
        <begin position="1083"/>
        <end position="1534"/>
    </location>
</feature>
<feature type="region of interest" description="Disordered" evidence="2">
    <location>
        <begin position="1565"/>
        <end position="1587"/>
    </location>
</feature>
<feature type="compositionally biased region" description="Polar residues" evidence="2">
    <location>
        <begin position="179"/>
        <end position="196"/>
    </location>
</feature>
<feature type="compositionally biased region" description="Polar residues" evidence="2">
    <location>
        <begin position="431"/>
        <end position="446"/>
    </location>
</feature>
<feature type="compositionally biased region" description="Basic and acidic residues" evidence="2">
    <location>
        <begin position="449"/>
        <end position="470"/>
    </location>
</feature>
<feature type="compositionally biased region" description="Polar residues" evidence="2">
    <location>
        <begin position="573"/>
        <end position="584"/>
    </location>
</feature>
<feature type="compositionally biased region" description="Low complexity" evidence="2">
    <location>
        <begin position="705"/>
        <end position="720"/>
    </location>
</feature>
<feature type="compositionally biased region" description="Polar residues" evidence="2">
    <location>
        <begin position="730"/>
        <end position="750"/>
    </location>
</feature>
<feature type="compositionally biased region" description="Polar residues" evidence="2">
    <location>
        <begin position="757"/>
        <end position="767"/>
    </location>
</feature>
<feature type="compositionally biased region" description="Polar residues" evidence="2">
    <location>
        <begin position="792"/>
        <end position="801"/>
    </location>
</feature>
<feature type="compositionally biased region" description="Polar residues" evidence="2">
    <location>
        <begin position="838"/>
        <end position="855"/>
    </location>
</feature>
<feature type="compositionally biased region" description="Low complexity" evidence="2">
    <location>
        <begin position="885"/>
        <end position="911"/>
    </location>
</feature>
<feature type="compositionally biased region" description="Pro residues" evidence="2">
    <location>
        <begin position="923"/>
        <end position="934"/>
    </location>
</feature>
<feature type="compositionally biased region" description="Pro residues" evidence="2">
    <location>
        <begin position="958"/>
        <end position="972"/>
    </location>
</feature>
<feature type="compositionally biased region" description="Pro residues" evidence="2">
    <location>
        <begin position="998"/>
        <end position="1021"/>
    </location>
</feature>
<feature type="compositionally biased region" description="Basic and acidic residues" evidence="2">
    <location>
        <begin position="1040"/>
        <end position="1055"/>
    </location>
</feature>
<feature type="compositionally biased region" description="Polar residues" evidence="2">
    <location>
        <begin position="1089"/>
        <end position="1099"/>
    </location>
</feature>
<feature type="compositionally biased region" description="Polar residues" evidence="2">
    <location>
        <begin position="1112"/>
        <end position="1141"/>
    </location>
</feature>
<feature type="compositionally biased region" description="Basic and acidic residues" evidence="2">
    <location>
        <begin position="1222"/>
        <end position="1234"/>
    </location>
</feature>
<feature type="compositionally biased region" description="Polar residues" evidence="2">
    <location>
        <begin position="1275"/>
        <end position="1285"/>
    </location>
</feature>
<feature type="compositionally biased region" description="Basic and acidic residues" evidence="2">
    <location>
        <begin position="1360"/>
        <end position="1370"/>
    </location>
</feature>
<feature type="compositionally biased region" description="Polar residues" evidence="2">
    <location>
        <begin position="1392"/>
        <end position="1409"/>
    </location>
</feature>
<feature type="compositionally biased region" description="Basic and acidic residues" evidence="2">
    <location>
        <begin position="1434"/>
        <end position="1447"/>
    </location>
</feature>
<feature type="compositionally biased region" description="Low complexity" evidence="2">
    <location>
        <begin position="1448"/>
        <end position="1460"/>
    </location>
</feature>
<feature type="compositionally biased region" description="Low complexity" evidence="2">
    <location>
        <begin position="1484"/>
        <end position="1503"/>
    </location>
</feature>
<feature type="compositionally biased region" description="Polar residues" evidence="2">
    <location>
        <begin position="1576"/>
        <end position="1587"/>
    </location>
</feature>
<feature type="modified residue" description="Phosphoserine" evidence="6">
    <location>
        <position position="24"/>
    </location>
</feature>
<feature type="modified residue" description="Phosphoserine" evidence="1">
    <location>
        <position position="197"/>
    </location>
</feature>
<feature type="modified residue" description="Phosphoserine" evidence="6">
    <location>
        <position position="328"/>
    </location>
</feature>
<feature type="modified residue" description="Phosphoserine" evidence="6">
    <location>
        <position position="563"/>
    </location>
</feature>
<feature type="modified residue" description="Phosphoserine" evidence="6">
    <location>
        <position position="629"/>
    </location>
</feature>
<feature type="modified residue" description="Phosphoserine" evidence="6">
    <location>
        <position position="1079"/>
    </location>
</feature>
<feature type="modified residue" description="Phosphoserine" evidence="1">
    <location>
        <position position="1157"/>
    </location>
</feature>
<feature type="modified residue" description="Phosphoserine" evidence="1">
    <location>
        <position position="1218"/>
    </location>
</feature>
<feature type="modified residue" description="Phosphoserine" evidence="5 6">
    <location>
        <position position="1373"/>
    </location>
</feature>
<feature type="modified residue" description="Phosphoserine" evidence="5 6">
    <location>
        <position position="1375"/>
    </location>
</feature>
<feature type="modified residue" description="Phosphothreonine" evidence="5 6">
    <location>
        <position position="1379"/>
    </location>
</feature>
<feature type="splice variant" id="VSP_034261" description="In isoform 3." evidence="3">
    <original>MKKDGSSGSFGIKASPGSLSRAVSWINFSSLSRQTKRLFRSDGELSVCGHQVEADDENWIYRTQPRKA</original>
    <variation>MVVFINAKIKSFFKLFKKKT</variation>
    <location>
        <begin position="1"/>
        <end position="68"/>
    </location>
</feature>
<feature type="splice variant" id="VSP_034263" description="In isoform 3." evidence="3">
    <original>T</original>
    <variation>TGENFDRQASLRRSLIYTDTLVRRPKKVKRRKTISGIPDIIQKEL</variation>
    <location>
        <position position="224"/>
    </location>
</feature>
<feature type="sequence conflict" description="In Ref. 3; AAH30842." evidence="4" ref="3">
    <original>Q</original>
    <variation>R</variation>
    <location>
        <position position="125"/>
    </location>
</feature>
<feature type="sequence conflict" description="In Ref. 3; AAH61949 and 4; BAD90251." evidence="4" ref="3 4">
    <original>S</original>
    <variation>G</variation>
    <location>
        <position position="1555"/>
    </location>
</feature>
<proteinExistence type="evidence at protein level"/>
<comment type="alternative products">
    <event type="alternative splicing"/>
    <isoform>
        <id>Q8CAF4-1</id>
        <name>1</name>
        <sequence type="displayed"/>
    </isoform>
    <isoform>
        <id>Q8CAF4-3</id>
        <name>3</name>
        <sequence type="described" ref="VSP_034261 VSP_034263"/>
    </isoform>
</comment>
<comment type="similarity">
    <text evidence="4">Belongs to the NHS family.</text>
</comment>
<comment type="sequence caution" evidence="4">
    <conflict type="erroneous initiation">
        <sequence resource="EMBL-CDS" id="AAH13565"/>
    </conflict>
</comment>
<comment type="sequence caution" evidence="4">
    <conflict type="miscellaneous discrepancy">
        <sequence resource="EMBL-CDS" id="AAH30842"/>
    </conflict>
    <text>Contaminating sequence. Sequence of unknown origin in the C-terminal part.</text>
</comment>
<comment type="sequence caution" evidence="4">
    <conflict type="erroneous initiation">
        <sequence resource="EMBL-CDS" id="AAH61949"/>
    </conflict>
</comment>
<comment type="sequence caution" evidence="4">
    <conflict type="miscellaneous discrepancy">
        <sequence resource="EMBL-CDS" id="BAB30793"/>
    </conflict>
    <text>Intron retention.</text>
</comment>
<comment type="sequence caution" evidence="4">
    <conflict type="erroneous initiation">
        <sequence resource="EMBL-CDS" id="BAC31551"/>
    </conflict>
</comment>
<comment type="sequence caution" evidence="4">
    <conflict type="erroneous initiation">
        <sequence resource="EMBL-CDS" id="BAE22306"/>
    </conflict>
</comment>
<reference key="1">
    <citation type="journal article" date="2009" name="PLoS Biol.">
        <title>Lineage-specific biology revealed by a finished genome assembly of the mouse.</title>
        <authorList>
            <person name="Church D.M."/>
            <person name="Goodstadt L."/>
            <person name="Hillier L.W."/>
            <person name="Zody M.C."/>
            <person name="Goldstein S."/>
            <person name="She X."/>
            <person name="Bult C.J."/>
            <person name="Agarwala R."/>
            <person name="Cherry J.L."/>
            <person name="DiCuccio M."/>
            <person name="Hlavina W."/>
            <person name="Kapustin Y."/>
            <person name="Meric P."/>
            <person name="Maglott D."/>
            <person name="Birtle Z."/>
            <person name="Marques A.C."/>
            <person name="Graves T."/>
            <person name="Zhou S."/>
            <person name="Teague B."/>
            <person name="Potamousis K."/>
            <person name="Churas C."/>
            <person name="Place M."/>
            <person name="Herschleb J."/>
            <person name="Runnheim R."/>
            <person name="Forrest D."/>
            <person name="Amos-Landgraf J."/>
            <person name="Schwartz D.C."/>
            <person name="Cheng Z."/>
            <person name="Lindblad-Toh K."/>
            <person name="Eichler E.E."/>
            <person name="Ponting C.P."/>
        </authorList>
    </citation>
    <scope>NUCLEOTIDE SEQUENCE [LARGE SCALE GENOMIC DNA]</scope>
    <source>
        <strain>C57BL/6J</strain>
    </source>
</reference>
<reference key="2">
    <citation type="journal article" date="2004" name="Genome Res.">
        <title>The status, quality, and expansion of the NIH full-length cDNA project: the Mammalian Gene Collection (MGC).</title>
        <authorList>
            <consortium name="The MGC Project Team"/>
        </authorList>
    </citation>
    <scope>NUCLEOTIDE SEQUENCE [LARGE SCALE MRNA] OF 1-526 (ISOFORM 3)</scope>
    <scope>NUCLEOTIDE SEQUENCE [LARGE SCALE MRNA] OF 1259-1587 (ISOFORM 1)</scope>
    <source>
        <strain>Czech II</strain>
        <strain>FVB/N-3</strain>
        <tissue>Mammary tumor</tissue>
    </source>
</reference>
<reference key="3">
    <citation type="journal article" date="2005" name="Science">
        <title>The transcriptional landscape of the mammalian genome.</title>
        <authorList>
            <person name="Carninci P."/>
            <person name="Kasukawa T."/>
            <person name="Katayama S."/>
            <person name="Gough J."/>
            <person name="Frith M.C."/>
            <person name="Maeda N."/>
            <person name="Oyama R."/>
            <person name="Ravasi T."/>
            <person name="Lenhard B."/>
            <person name="Wells C."/>
            <person name="Kodzius R."/>
            <person name="Shimokawa K."/>
            <person name="Bajic V.B."/>
            <person name="Brenner S.E."/>
            <person name="Batalov S."/>
            <person name="Forrest A.R."/>
            <person name="Zavolan M."/>
            <person name="Davis M.J."/>
            <person name="Wilming L.G."/>
            <person name="Aidinis V."/>
            <person name="Allen J.E."/>
            <person name="Ambesi-Impiombato A."/>
            <person name="Apweiler R."/>
            <person name="Aturaliya R.N."/>
            <person name="Bailey T.L."/>
            <person name="Bansal M."/>
            <person name="Baxter L."/>
            <person name="Beisel K.W."/>
            <person name="Bersano T."/>
            <person name="Bono H."/>
            <person name="Chalk A.M."/>
            <person name="Chiu K.P."/>
            <person name="Choudhary V."/>
            <person name="Christoffels A."/>
            <person name="Clutterbuck D.R."/>
            <person name="Crowe M.L."/>
            <person name="Dalla E."/>
            <person name="Dalrymple B.P."/>
            <person name="de Bono B."/>
            <person name="Della Gatta G."/>
            <person name="di Bernardo D."/>
            <person name="Down T."/>
            <person name="Engstrom P."/>
            <person name="Fagiolini M."/>
            <person name="Faulkner G."/>
            <person name="Fletcher C.F."/>
            <person name="Fukushima T."/>
            <person name="Furuno M."/>
            <person name="Futaki S."/>
            <person name="Gariboldi M."/>
            <person name="Georgii-Hemming P."/>
            <person name="Gingeras T.R."/>
            <person name="Gojobori T."/>
            <person name="Green R.E."/>
            <person name="Gustincich S."/>
            <person name="Harbers M."/>
            <person name="Hayashi Y."/>
            <person name="Hensch T.K."/>
            <person name="Hirokawa N."/>
            <person name="Hill D."/>
            <person name="Huminiecki L."/>
            <person name="Iacono M."/>
            <person name="Ikeo K."/>
            <person name="Iwama A."/>
            <person name="Ishikawa T."/>
            <person name="Jakt M."/>
            <person name="Kanapin A."/>
            <person name="Katoh M."/>
            <person name="Kawasawa Y."/>
            <person name="Kelso J."/>
            <person name="Kitamura H."/>
            <person name="Kitano H."/>
            <person name="Kollias G."/>
            <person name="Krishnan S.P."/>
            <person name="Kruger A."/>
            <person name="Kummerfeld S.K."/>
            <person name="Kurochkin I.V."/>
            <person name="Lareau L.F."/>
            <person name="Lazarevic D."/>
            <person name="Lipovich L."/>
            <person name="Liu J."/>
            <person name="Liuni S."/>
            <person name="McWilliam S."/>
            <person name="Madan Babu M."/>
            <person name="Madera M."/>
            <person name="Marchionni L."/>
            <person name="Matsuda H."/>
            <person name="Matsuzawa S."/>
            <person name="Miki H."/>
            <person name="Mignone F."/>
            <person name="Miyake S."/>
            <person name="Morris K."/>
            <person name="Mottagui-Tabar S."/>
            <person name="Mulder N."/>
            <person name="Nakano N."/>
            <person name="Nakauchi H."/>
            <person name="Ng P."/>
            <person name="Nilsson R."/>
            <person name="Nishiguchi S."/>
            <person name="Nishikawa S."/>
            <person name="Nori F."/>
            <person name="Ohara O."/>
            <person name="Okazaki Y."/>
            <person name="Orlando V."/>
            <person name="Pang K.C."/>
            <person name="Pavan W.J."/>
            <person name="Pavesi G."/>
            <person name="Pesole G."/>
            <person name="Petrovsky N."/>
            <person name="Piazza S."/>
            <person name="Reed J."/>
            <person name="Reid J.F."/>
            <person name="Ring B.Z."/>
            <person name="Ringwald M."/>
            <person name="Rost B."/>
            <person name="Ruan Y."/>
            <person name="Salzberg S.L."/>
            <person name="Sandelin A."/>
            <person name="Schneider C."/>
            <person name="Schoenbach C."/>
            <person name="Sekiguchi K."/>
            <person name="Semple C.A."/>
            <person name="Seno S."/>
            <person name="Sessa L."/>
            <person name="Sheng Y."/>
            <person name="Shibata Y."/>
            <person name="Shimada H."/>
            <person name="Shimada K."/>
            <person name="Silva D."/>
            <person name="Sinclair B."/>
            <person name="Sperling S."/>
            <person name="Stupka E."/>
            <person name="Sugiura K."/>
            <person name="Sultana R."/>
            <person name="Takenaka Y."/>
            <person name="Taki K."/>
            <person name="Tammoja K."/>
            <person name="Tan S.L."/>
            <person name="Tang S."/>
            <person name="Taylor M.S."/>
            <person name="Tegner J."/>
            <person name="Teichmann S.A."/>
            <person name="Ueda H.R."/>
            <person name="van Nimwegen E."/>
            <person name="Verardo R."/>
            <person name="Wei C.L."/>
            <person name="Yagi K."/>
            <person name="Yamanishi H."/>
            <person name="Zabarovsky E."/>
            <person name="Zhu S."/>
            <person name="Zimmer A."/>
            <person name="Hide W."/>
            <person name="Bult C."/>
            <person name="Grimmond S.M."/>
            <person name="Teasdale R.D."/>
            <person name="Liu E.T."/>
            <person name="Brusic V."/>
            <person name="Quackenbush J."/>
            <person name="Wahlestedt C."/>
            <person name="Mattick J.S."/>
            <person name="Hume D.A."/>
            <person name="Kai C."/>
            <person name="Sasaki D."/>
            <person name="Tomaru Y."/>
            <person name="Fukuda S."/>
            <person name="Kanamori-Katayama M."/>
            <person name="Suzuki M."/>
            <person name="Aoki J."/>
            <person name="Arakawa T."/>
            <person name="Iida J."/>
            <person name="Imamura K."/>
            <person name="Itoh M."/>
            <person name="Kato T."/>
            <person name="Kawaji H."/>
            <person name="Kawagashira N."/>
            <person name="Kawashima T."/>
            <person name="Kojima M."/>
            <person name="Kondo S."/>
            <person name="Konno H."/>
            <person name="Nakano K."/>
            <person name="Ninomiya N."/>
            <person name="Nishio T."/>
            <person name="Okada M."/>
            <person name="Plessy C."/>
            <person name="Shibata K."/>
            <person name="Shiraki T."/>
            <person name="Suzuki S."/>
            <person name="Tagami M."/>
            <person name="Waki K."/>
            <person name="Watahiki A."/>
            <person name="Okamura-Oho Y."/>
            <person name="Suzuki H."/>
            <person name="Kawai J."/>
            <person name="Hayashizaki Y."/>
        </authorList>
    </citation>
    <scope>NUCLEOTIDE SEQUENCE [LARGE SCALE MRNA] OF 1-446 AND 1140-1587 (ISOFORM 1)</scope>
    <source>
        <strain>C57BL/6J</strain>
        <tissue>Cerebellum</tissue>
        <tissue>Hypothalamus</tissue>
        <tissue>Medulla oblongata</tissue>
    </source>
</reference>
<reference key="4">
    <citation type="submission" date="2005-02" db="EMBL/GenBank/DDBJ databases">
        <title>Prediction of the coding sequences of mouse homologues of KIAA gene. The complete nucleotide sequences of mouse KIAA-homologous cDNAs identified by screening of terminal sequences of cDNA clones randomly sampled from size-fractionated libraries.</title>
        <authorList>
            <person name="Okazaki N."/>
            <person name="Kikuno R.F."/>
            <person name="Ohara R."/>
            <person name="Inamoto S."/>
            <person name="Nagase T."/>
            <person name="Ohara O."/>
            <person name="Koga H."/>
        </authorList>
    </citation>
    <scope>NUCLEOTIDE SEQUENCE [LARGE SCALE MRNA] OF 1107-1587 (ISOFORM 1)</scope>
    <source>
        <tissue>Kidney</tissue>
    </source>
</reference>
<reference key="5">
    <citation type="journal article" date="2007" name="Proc. Natl. Acad. Sci. U.S.A.">
        <title>Large-scale phosphorylation analysis of mouse liver.</title>
        <authorList>
            <person name="Villen J."/>
            <person name="Beausoleil S.A."/>
            <person name="Gerber S.A."/>
            <person name="Gygi S.P."/>
        </authorList>
    </citation>
    <scope>PHOSPHORYLATION [LARGE SCALE ANALYSIS] AT SER-1373; SER-1375 AND THR-1379</scope>
    <scope>IDENTIFICATION BY MASS SPECTROMETRY [LARGE SCALE ANALYSIS]</scope>
    <source>
        <tissue>Liver</tissue>
    </source>
</reference>
<reference key="6">
    <citation type="journal article" date="2010" name="Cell">
        <title>A tissue-specific atlas of mouse protein phosphorylation and expression.</title>
        <authorList>
            <person name="Huttlin E.L."/>
            <person name="Jedrychowski M.P."/>
            <person name="Elias J.E."/>
            <person name="Goswami T."/>
            <person name="Rad R."/>
            <person name="Beausoleil S.A."/>
            <person name="Villen J."/>
            <person name="Haas W."/>
            <person name="Sowa M.E."/>
            <person name="Gygi S.P."/>
        </authorList>
    </citation>
    <scope>PHOSPHORYLATION [LARGE SCALE ANALYSIS] AT SER-24; SER-328; SER-563; SER-629; SER-1079; SER-1373; SER-1375 AND THR-1379</scope>
    <scope>IDENTIFICATION BY MASS SPECTROMETRY [LARGE SCALE ANALYSIS]</scope>
    <source>
        <tissue>Brain</tissue>
        <tissue>Brown adipose tissue</tissue>
        <tissue>Heart</tissue>
        <tissue>Kidney</tissue>
        <tissue>Liver</tissue>
        <tissue>Lung</tissue>
        <tissue>Testis</tissue>
    </source>
</reference>
<evidence type="ECO:0000250" key="1">
    <source>
        <dbReference type="UniProtKB" id="Q5SYE7"/>
    </source>
</evidence>
<evidence type="ECO:0000256" key="2">
    <source>
        <dbReference type="SAM" id="MobiDB-lite"/>
    </source>
</evidence>
<evidence type="ECO:0000303" key="3">
    <source>
    </source>
</evidence>
<evidence type="ECO:0000305" key="4"/>
<evidence type="ECO:0007744" key="5">
    <source>
    </source>
</evidence>
<evidence type="ECO:0007744" key="6">
    <source>
    </source>
</evidence>